<dbReference type="EC" id="6.1.1.9" evidence="1"/>
<dbReference type="EMBL" id="AE015450">
    <property type="protein sequence ID" value="AAP56918.2"/>
    <property type="molecule type" value="Genomic_DNA"/>
</dbReference>
<dbReference type="RefSeq" id="WP_011113825.1">
    <property type="nucleotide sequence ID" value="NC_004829.2"/>
</dbReference>
<dbReference type="SMR" id="Q7NAR7"/>
<dbReference type="KEGG" id="mga:MGA_0338"/>
<dbReference type="PATRIC" id="fig|233150.7.peg.640"/>
<dbReference type="HOGENOM" id="CLU_001493_0_2_14"/>
<dbReference type="OrthoDB" id="9810365at2"/>
<dbReference type="Proteomes" id="UP000001418">
    <property type="component" value="Chromosome"/>
</dbReference>
<dbReference type="GO" id="GO:0005829">
    <property type="term" value="C:cytosol"/>
    <property type="evidence" value="ECO:0007669"/>
    <property type="project" value="TreeGrafter"/>
</dbReference>
<dbReference type="GO" id="GO:0002161">
    <property type="term" value="F:aminoacyl-tRNA deacylase activity"/>
    <property type="evidence" value="ECO:0007669"/>
    <property type="project" value="InterPro"/>
</dbReference>
<dbReference type="GO" id="GO:0005524">
    <property type="term" value="F:ATP binding"/>
    <property type="evidence" value="ECO:0007669"/>
    <property type="project" value="UniProtKB-UniRule"/>
</dbReference>
<dbReference type="GO" id="GO:0004832">
    <property type="term" value="F:valine-tRNA ligase activity"/>
    <property type="evidence" value="ECO:0007669"/>
    <property type="project" value="UniProtKB-UniRule"/>
</dbReference>
<dbReference type="GO" id="GO:0006438">
    <property type="term" value="P:valyl-tRNA aminoacylation"/>
    <property type="evidence" value="ECO:0007669"/>
    <property type="project" value="UniProtKB-UniRule"/>
</dbReference>
<dbReference type="CDD" id="cd07962">
    <property type="entry name" value="Anticodon_Ia_Val"/>
    <property type="match status" value="1"/>
</dbReference>
<dbReference type="Gene3D" id="3.40.50.620">
    <property type="entry name" value="HUPs"/>
    <property type="match status" value="1"/>
</dbReference>
<dbReference type="Gene3D" id="1.10.730.10">
    <property type="entry name" value="Isoleucyl-tRNA Synthetase, Domain 1"/>
    <property type="match status" value="1"/>
</dbReference>
<dbReference type="Gene3D" id="1.10.287.380">
    <property type="entry name" value="Valyl-tRNA synthetase, C-terminal domain"/>
    <property type="match status" value="1"/>
</dbReference>
<dbReference type="Gene3D" id="3.90.740.10">
    <property type="entry name" value="Valyl/Leucyl/Isoleucyl-tRNA synthetase, editing domain"/>
    <property type="match status" value="1"/>
</dbReference>
<dbReference type="HAMAP" id="MF_02004">
    <property type="entry name" value="Val_tRNA_synth_type1"/>
    <property type="match status" value="1"/>
</dbReference>
<dbReference type="InterPro" id="IPR001412">
    <property type="entry name" value="aa-tRNA-synth_I_CS"/>
</dbReference>
<dbReference type="InterPro" id="IPR002300">
    <property type="entry name" value="aa-tRNA-synth_Ia"/>
</dbReference>
<dbReference type="InterPro" id="IPR033705">
    <property type="entry name" value="Anticodon_Ia_Val"/>
</dbReference>
<dbReference type="InterPro" id="IPR013155">
    <property type="entry name" value="M/V/L/I-tRNA-synth_anticd-bd"/>
</dbReference>
<dbReference type="InterPro" id="IPR014729">
    <property type="entry name" value="Rossmann-like_a/b/a_fold"/>
</dbReference>
<dbReference type="InterPro" id="IPR010978">
    <property type="entry name" value="tRNA-bd_arm"/>
</dbReference>
<dbReference type="InterPro" id="IPR009080">
    <property type="entry name" value="tRNAsynth_Ia_anticodon-bd"/>
</dbReference>
<dbReference type="InterPro" id="IPR037118">
    <property type="entry name" value="Val-tRNA_synth_C_sf"/>
</dbReference>
<dbReference type="InterPro" id="IPR009008">
    <property type="entry name" value="Val/Leu/Ile-tRNA-synth_edit"/>
</dbReference>
<dbReference type="InterPro" id="IPR002303">
    <property type="entry name" value="Valyl-tRNA_ligase"/>
</dbReference>
<dbReference type="NCBIfam" id="NF004349">
    <property type="entry name" value="PRK05729.1"/>
    <property type="match status" value="1"/>
</dbReference>
<dbReference type="NCBIfam" id="TIGR00422">
    <property type="entry name" value="valS"/>
    <property type="match status" value="1"/>
</dbReference>
<dbReference type="PANTHER" id="PTHR11946:SF93">
    <property type="entry name" value="VALINE--TRNA LIGASE, CHLOROPLASTIC_MITOCHONDRIAL 2"/>
    <property type="match status" value="1"/>
</dbReference>
<dbReference type="PANTHER" id="PTHR11946">
    <property type="entry name" value="VALYL-TRNA SYNTHETASES"/>
    <property type="match status" value="1"/>
</dbReference>
<dbReference type="Pfam" id="PF08264">
    <property type="entry name" value="Anticodon_1"/>
    <property type="match status" value="1"/>
</dbReference>
<dbReference type="Pfam" id="PF00133">
    <property type="entry name" value="tRNA-synt_1"/>
    <property type="match status" value="2"/>
</dbReference>
<dbReference type="PRINTS" id="PR00986">
    <property type="entry name" value="TRNASYNTHVAL"/>
</dbReference>
<dbReference type="SUPFAM" id="SSF47323">
    <property type="entry name" value="Anticodon-binding domain of a subclass of class I aminoacyl-tRNA synthetases"/>
    <property type="match status" value="1"/>
</dbReference>
<dbReference type="SUPFAM" id="SSF52374">
    <property type="entry name" value="Nucleotidylyl transferase"/>
    <property type="match status" value="1"/>
</dbReference>
<dbReference type="SUPFAM" id="SSF46589">
    <property type="entry name" value="tRNA-binding arm"/>
    <property type="match status" value="1"/>
</dbReference>
<dbReference type="SUPFAM" id="SSF50677">
    <property type="entry name" value="ValRS/IleRS/LeuRS editing domain"/>
    <property type="match status" value="1"/>
</dbReference>
<dbReference type="PROSITE" id="PS00178">
    <property type="entry name" value="AA_TRNA_LIGASE_I"/>
    <property type="match status" value="1"/>
</dbReference>
<feature type="chain" id="PRO_0000224507" description="Valine--tRNA ligase">
    <location>
        <begin position="1"/>
        <end position="860"/>
    </location>
</feature>
<feature type="coiled-coil region" evidence="1">
    <location>
        <begin position="794"/>
        <end position="860"/>
    </location>
</feature>
<feature type="short sequence motif" description="'HIGH' region">
    <location>
        <begin position="53"/>
        <end position="63"/>
    </location>
</feature>
<feature type="short sequence motif" description="'KMSKS' region">
    <location>
        <begin position="527"/>
        <end position="531"/>
    </location>
</feature>
<feature type="binding site" evidence="1">
    <location>
        <position position="530"/>
    </location>
    <ligand>
        <name>ATP</name>
        <dbReference type="ChEBI" id="CHEBI:30616"/>
    </ligand>
</feature>
<sequence>MKRLKKIDLNQKYDHKTVSEGVVDFWLTTDYANQDSDFCDPNAKPFSIIMPPPNLTGILHIGHAWNLSIQDLIVRYQKLVMGKINWIPGTDHAGIATQTKFESIQRTKEINYKKDDRTTHFNNIYQWSQESSQTIKNQAKSLGLALNWKKEKFTLSQESNKYVLDVFVKLYQQGYIVKKYTLVNWDTKLNTAISNIEVINKETTQKLHYIKYYLKDSNDYLVIATTRPETIYADVAVFVNPNDQRYLKYHNQMVINPLNNKLIPILVDEYIDMEFGSAVMKCTPGHDHNDYALSKKYQLEELSCINFDGTLNELALEFSGLDLYEARELIVKKLISEDKYVKFEEITSNVGYSDRSNVIVQPLLSKQWFLITTKFVDEIKKLVNNEDQIKIYPKRFLDTINNWLDHNQDWCISRQLVWGHQIPAWYHKDHPDEVIVSINSPGDDYYRDSDVLDTWFSSALWPLICFDDGLDQKEFNANFPNSLLVTAYDIVFFWVLRMIFMSWLLKKSIPFHDLLLHGLILDEHNRKMSKSLNNGVDPIQIIDQYGADALRLFLTSNTSPGEDVSYNVEKINAAASFLNKLWNLARYLKLIDQSKLTDQPLDSLDHWIIHRFNEVNAGIQDKLKEYRFALSNKQLSDFIWDDFANVYIELNKKAQWSKAKFELANDIFRKFLIMLHPSVPFITEQIYNTFEFSDSKPSIILEKWPGLIKIENALDHFDQIFNLIIKIRNFKQSFDLKNKDTLDLLYKNEVSYIKDLTKYLKTENVNLIKISDQKLNDLFLIATEDNEFYVVYTQDKTKIVDKLVVEIAKLEKEVERSSNIVNNKNFKKKAPKEKYEAELKKLSNYQEELKLKQDKLNSLK</sequence>
<keyword id="KW-0030">Aminoacyl-tRNA synthetase</keyword>
<keyword id="KW-0067">ATP-binding</keyword>
<keyword id="KW-0175">Coiled coil</keyword>
<keyword id="KW-0963">Cytoplasm</keyword>
<keyword id="KW-0436">Ligase</keyword>
<keyword id="KW-0547">Nucleotide-binding</keyword>
<keyword id="KW-0648">Protein biosynthesis</keyword>
<keyword id="KW-1185">Reference proteome</keyword>
<name>SYV_MYCGA</name>
<comment type="function">
    <text evidence="1">Catalyzes the attachment of valine to tRNA(Val). As ValRS can inadvertently accommodate and process structurally similar amino acids such as threonine, to avoid such errors, it has a 'posttransfer' editing activity that hydrolyzes mischarged Thr-tRNA(Val) in a tRNA-dependent manner.</text>
</comment>
<comment type="catalytic activity">
    <reaction evidence="1">
        <text>tRNA(Val) + L-valine + ATP = L-valyl-tRNA(Val) + AMP + diphosphate</text>
        <dbReference type="Rhea" id="RHEA:10704"/>
        <dbReference type="Rhea" id="RHEA-COMP:9672"/>
        <dbReference type="Rhea" id="RHEA-COMP:9708"/>
        <dbReference type="ChEBI" id="CHEBI:30616"/>
        <dbReference type="ChEBI" id="CHEBI:33019"/>
        <dbReference type="ChEBI" id="CHEBI:57762"/>
        <dbReference type="ChEBI" id="CHEBI:78442"/>
        <dbReference type="ChEBI" id="CHEBI:78537"/>
        <dbReference type="ChEBI" id="CHEBI:456215"/>
        <dbReference type="EC" id="6.1.1.9"/>
    </reaction>
</comment>
<comment type="subunit">
    <text evidence="1">Monomer.</text>
</comment>
<comment type="subcellular location">
    <subcellularLocation>
        <location evidence="1">Cytoplasm</location>
    </subcellularLocation>
</comment>
<comment type="domain">
    <text evidence="1">ValRS has two distinct active sites: one for aminoacylation and one for editing. The misactivated threonine is translocated from the active site to the editing site.</text>
</comment>
<comment type="domain">
    <text evidence="1">The C-terminal coiled-coil domain is crucial for aminoacylation activity.</text>
</comment>
<comment type="similarity">
    <text evidence="1">Belongs to the class-I aminoacyl-tRNA synthetase family. ValS type 1 subfamily.</text>
</comment>
<reference key="1">
    <citation type="journal article" date="2003" name="Microbiology">
        <title>The complete genome sequence of the avian pathogen Mycoplasma gallisepticum strain R(low).</title>
        <authorList>
            <person name="Papazisi L."/>
            <person name="Gorton T.S."/>
            <person name="Kutish G."/>
            <person name="Markham P.F."/>
            <person name="Browning G.F."/>
            <person name="Nguyen D.K."/>
            <person name="Swartzell S."/>
            <person name="Madan A."/>
            <person name="Mahairas G."/>
            <person name="Geary S.J."/>
        </authorList>
    </citation>
    <scope>NUCLEOTIDE SEQUENCE [LARGE SCALE GENOMIC DNA]</scope>
    <source>
        <strain>R(low / passage 15 / clone 2)</strain>
    </source>
</reference>
<proteinExistence type="inferred from homology"/>
<protein>
    <recommendedName>
        <fullName evidence="1">Valine--tRNA ligase</fullName>
        <ecNumber evidence="1">6.1.1.9</ecNumber>
    </recommendedName>
    <alternativeName>
        <fullName evidence="1">Valyl-tRNA synthetase</fullName>
        <shortName evidence="1">ValRS</shortName>
    </alternativeName>
</protein>
<evidence type="ECO:0000255" key="1">
    <source>
        <dbReference type="HAMAP-Rule" id="MF_02004"/>
    </source>
</evidence>
<accession>Q7NAR7</accession>
<gene>
    <name evidence="1" type="primary">valS</name>
    <name type="ordered locus">MYCGA5680</name>
    <name type="ORF">MGA_0338</name>
</gene>
<organism>
    <name type="scientific">Mycoplasmoides gallisepticum (strain R(low / passage 15 / clone 2))</name>
    <name type="common">Mycoplasma gallisepticum</name>
    <dbReference type="NCBI Taxonomy" id="710127"/>
    <lineage>
        <taxon>Bacteria</taxon>
        <taxon>Bacillati</taxon>
        <taxon>Mycoplasmatota</taxon>
        <taxon>Mycoplasmoidales</taxon>
        <taxon>Mycoplasmoidaceae</taxon>
        <taxon>Mycoplasmoides</taxon>
    </lineage>
</organism>